<comment type="function">
    <text evidence="1">Required for the insertion and/or proper folding and/or complex formation of integral membrane proteins into the membrane. Involved in integration of membrane proteins that insert both dependently and independently of the Sec translocase complex, as well as at least some lipoproteins.</text>
</comment>
<comment type="subcellular location">
    <subcellularLocation>
        <location evidence="1">Cell membrane</location>
        <topology evidence="1">Multi-pass membrane protein</topology>
    </subcellularLocation>
</comment>
<comment type="similarity">
    <text evidence="1">Belongs to the OXA1/ALB3/YidC family. Type 2 subfamily.</text>
</comment>
<accession>Q9A1C3</accession>
<accession>Q490Q4</accession>
<protein>
    <recommendedName>
        <fullName evidence="1">Membrane protein insertase YidC 2</fullName>
    </recommendedName>
    <alternativeName>
        <fullName evidence="1">Foldase YidC 2</fullName>
    </alternativeName>
    <alternativeName>
        <fullName evidence="1">Membrane integrase YidC 2</fullName>
    </alternativeName>
    <alternativeName>
        <fullName evidence="1">Membrane protein YidC 2</fullName>
    </alternativeName>
</protein>
<evidence type="ECO:0000255" key="1">
    <source>
        <dbReference type="HAMAP-Rule" id="MF_01811"/>
    </source>
</evidence>
<evidence type="ECO:0000256" key="2">
    <source>
        <dbReference type="SAM" id="MobiDB-lite"/>
    </source>
</evidence>
<keyword id="KW-1003">Cell membrane</keyword>
<keyword id="KW-0143">Chaperone</keyword>
<keyword id="KW-0449">Lipoprotein</keyword>
<keyword id="KW-0472">Membrane</keyword>
<keyword id="KW-0564">Palmitate</keyword>
<keyword id="KW-0653">Protein transport</keyword>
<keyword id="KW-1185">Reference proteome</keyword>
<keyword id="KW-0732">Signal</keyword>
<keyword id="KW-0812">Transmembrane</keyword>
<keyword id="KW-1133">Transmembrane helix</keyword>
<keyword id="KW-0813">Transport</keyword>
<feature type="signal peptide" evidence="1">
    <location>
        <begin position="1"/>
        <end position="23"/>
    </location>
</feature>
<feature type="chain" id="PRO_0000020411" description="Membrane protein insertase YidC 2">
    <location>
        <begin position="24"/>
        <end position="307"/>
    </location>
</feature>
<feature type="transmembrane region" description="Helical" evidence="1">
    <location>
        <begin position="58"/>
        <end position="78"/>
    </location>
</feature>
<feature type="transmembrane region" description="Helical" evidence="1">
    <location>
        <begin position="135"/>
        <end position="155"/>
    </location>
</feature>
<feature type="transmembrane region" description="Helical" evidence="1">
    <location>
        <begin position="179"/>
        <end position="199"/>
    </location>
</feature>
<feature type="transmembrane region" description="Helical" evidence="1">
    <location>
        <begin position="209"/>
        <end position="225"/>
    </location>
</feature>
<feature type="transmembrane region" description="Helical" evidence="1">
    <location>
        <begin position="231"/>
        <end position="251"/>
    </location>
</feature>
<feature type="region of interest" description="Disordered" evidence="2">
    <location>
        <begin position="263"/>
        <end position="307"/>
    </location>
</feature>
<feature type="compositionally biased region" description="Polar residues" evidence="2">
    <location>
        <begin position="271"/>
        <end position="288"/>
    </location>
</feature>
<feature type="compositionally biased region" description="Basic residues" evidence="2">
    <location>
        <begin position="293"/>
        <end position="307"/>
    </location>
</feature>
<feature type="lipid moiety-binding region" description="N-palmitoyl cysteine" evidence="1">
    <location>
        <position position="24"/>
    </location>
</feature>
<feature type="lipid moiety-binding region" description="S-diacylglycerol cysteine" evidence="1">
    <location>
        <position position="24"/>
    </location>
</feature>
<name>YIDC2_STRP1</name>
<reference key="1">
    <citation type="journal article" date="2001" name="Proc. Natl. Acad. Sci. U.S.A.">
        <title>Complete genome sequence of an M1 strain of Streptococcus pyogenes.</title>
        <authorList>
            <person name="Ferretti J.J."/>
            <person name="McShan W.M."/>
            <person name="Ajdic D.J."/>
            <person name="Savic D.J."/>
            <person name="Savic G."/>
            <person name="Lyon K."/>
            <person name="Primeaux C."/>
            <person name="Sezate S."/>
            <person name="Suvorov A.N."/>
            <person name="Kenton S."/>
            <person name="Lai H.S."/>
            <person name="Lin S.P."/>
            <person name="Qian Y."/>
            <person name="Jia H.G."/>
            <person name="Najar F.Z."/>
            <person name="Ren Q."/>
            <person name="Zhu H."/>
            <person name="Song L."/>
            <person name="White J."/>
            <person name="Yuan X."/>
            <person name="Clifton S.W."/>
            <person name="Roe B.A."/>
            <person name="McLaughlin R.E."/>
        </authorList>
    </citation>
    <scope>NUCLEOTIDE SEQUENCE [LARGE SCALE GENOMIC DNA]</scope>
    <source>
        <strain>ATCC 700294 / SF370 / Serotype M1</strain>
    </source>
</reference>
<reference key="2">
    <citation type="journal article" date="2005" name="J. Infect. Dis.">
        <title>Evolutionary origin and emergence of a highly successful clone of serotype M1 group A Streptococcus involved multiple horizontal gene transfer events.</title>
        <authorList>
            <person name="Sumby P."/>
            <person name="Porcella S.F."/>
            <person name="Madrigal A.G."/>
            <person name="Barbian K.D."/>
            <person name="Virtaneva K."/>
            <person name="Ricklefs S.M."/>
            <person name="Sturdevant D.E."/>
            <person name="Graham M.R."/>
            <person name="Vuopio-Varkila J."/>
            <person name="Hoe N.P."/>
            <person name="Musser J.M."/>
        </authorList>
    </citation>
    <scope>NUCLEOTIDE SEQUENCE [LARGE SCALE GENOMIC DNA]</scope>
    <source>
        <strain>ATCC BAA-947 / MGAS5005 / Serotype M1</strain>
    </source>
</reference>
<gene>
    <name evidence="1" type="primary">yidC2</name>
    <name type="ordered locus">SPy_0351</name>
    <name type="ordered locus">M5005_Spy0295</name>
</gene>
<dbReference type="EMBL" id="AE004092">
    <property type="protein sequence ID" value="AAK33400.1"/>
    <property type="molecule type" value="Genomic_DNA"/>
</dbReference>
<dbReference type="EMBL" id="CP000017">
    <property type="protein sequence ID" value="AAZ50914.1"/>
    <property type="molecule type" value="Genomic_DNA"/>
</dbReference>
<dbReference type="RefSeq" id="NP_268679.1">
    <property type="nucleotide sequence ID" value="NC_002737.2"/>
</dbReference>
<dbReference type="SMR" id="Q9A1C3"/>
<dbReference type="PaxDb" id="1314-HKU360_00333"/>
<dbReference type="KEGG" id="spy:SPy_0351"/>
<dbReference type="KEGG" id="spz:M5005_Spy0295"/>
<dbReference type="PATRIC" id="fig|160490.10.peg.302"/>
<dbReference type="HOGENOM" id="CLU_036138_5_1_9"/>
<dbReference type="OMA" id="GWAIIII"/>
<dbReference type="Proteomes" id="UP000000750">
    <property type="component" value="Chromosome"/>
</dbReference>
<dbReference type="GO" id="GO:0005886">
    <property type="term" value="C:plasma membrane"/>
    <property type="evidence" value="ECO:0007669"/>
    <property type="project" value="UniProtKB-SubCell"/>
</dbReference>
<dbReference type="GO" id="GO:0032977">
    <property type="term" value="F:membrane insertase activity"/>
    <property type="evidence" value="ECO:0007669"/>
    <property type="project" value="InterPro"/>
</dbReference>
<dbReference type="GO" id="GO:0051205">
    <property type="term" value="P:protein insertion into membrane"/>
    <property type="evidence" value="ECO:0007669"/>
    <property type="project" value="TreeGrafter"/>
</dbReference>
<dbReference type="GO" id="GO:0015031">
    <property type="term" value="P:protein transport"/>
    <property type="evidence" value="ECO:0007669"/>
    <property type="project" value="UniProtKB-KW"/>
</dbReference>
<dbReference type="CDD" id="cd20070">
    <property type="entry name" value="5TM_YidC_Alb3"/>
    <property type="match status" value="1"/>
</dbReference>
<dbReference type="HAMAP" id="MF_01811">
    <property type="entry name" value="YidC_type2"/>
    <property type="match status" value="1"/>
</dbReference>
<dbReference type="InterPro" id="IPR001708">
    <property type="entry name" value="YidC/ALB3/OXA1/COX18"/>
</dbReference>
<dbReference type="InterPro" id="IPR028055">
    <property type="entry name" value="YidC/Oxa/ALB_C"/>
</dbReference>
<dbReference type="InterPro" id="IPR023060">
    <property type="entry name" value="YidC/YidC1/YidC2_Firmicutes"/>
</dbReference>
<dbReference type="InterPro" id="IPR047196">
    <property type="entry name" value="YidC_ALB_C"/>
</dbReference>
<dbReference type="NCBIfam" id="NF002687">
    <property type="entry name" value="PRK02463.1"/>
    <property type="match status" value="1"/>
</dbReference>
<dbReference type="NCBIfam" id="TIGR03592">
    <property type="entry name" value="yidC_oxa1_cterm"/>
    <property type="match status" value="1"/>
</dbReference>
<dbReference type="PANTHER" id="PTHR12428:SF65">
    <property type="entry name" value="CYTOCHROME C OXIDASE ASSEMBLY PROTEIN COX18, MITOCHONDRIAL"/>
    <property type="match status" value="1"/>
</dbReference>
<dbReference type="PANTHER" id="PTHR12428">
    <property type="entry name" value="OXA1"/>
    <property type="match status" value="1"/>
</dbReference>
<dbReference type="Pfam" id="PF02096">
    <property type="entry name" value="60KD_IMP"/>
    <property type="match status" value="1"/>
</dbReference>
<dbReference type="PROSITE" id="PS51257">
    <property type="entry name" value="PROKAR_LIPOPROTEIN"/>
    <property type="match status" value="1"/>
</dbReference>
<proteinExistence type="inferred from homology"/>
<organism>
    <name type="scientific">Streptococcus pyogenes serotype M1</name>
    <dbReference type="NCBI Taxonomy" id="301447"/>
    <lineage>
        <taxon>Bacteria</taxon>
        <taxon>Bacillati</taxon>
        <taxon>Bacillota</taxon>
        <taxon>Bacilli</taxon>
        <taxon>Lactobacillales</taxon>
        <taxon>Streptococcaceae</taxon>
        <taxon>Streptococcus</taxon>
    </lineage>
</organism>
<sequence length="307" mass="34506">MKLTLNRILFSGLALSILLTLTGCVGRDAHGNPKGMIWEFLGKPMSYFIDYFANNAGLGYGLAIIIVTIIVRTLILPLGLYQSWKASYQSEKMAFLKPVFEPINKRIKQANSQEEKMAAQTELMAAQRAHGINPLGGIGCLPLLIQMPFFSAMYFAAQYTKGVSTSTFMGIDLGSRSLVLTAIIAALYFFQSWLSMMAVSEEQREQMKTMMYTMPIMMIFMSFSLPAGVGLYWLVGGFFSIIQQLITTYLLKPRLHKQIKEEYAKNPPKAYQSTSSRKDVTPSQNMEQANLPKKIKSNRNAGKQRKR</sequence>